<reference key="1">
    <citation type="submission" date="2007-11" db="EMBL/GenBank/DDBJ databases">
        <title>Complete sequence of chromosome of Shewanella baltica OS195.</title>
        <authorList>
            <consortium name="US DOE Joint Genome Institute"/>
            <person name="Copeland A."/>
            <person name="Lucas S."/>
            <person name="Lapidus A."/>
            <person name="Barry K."/>
            <person name="Glavina del Rio T."/>
            <person name="Dalin E."/>
            <person name="Tice H."/>
            <person name="Pitluck S."/>
            <person name="Chain P."/>
            <person name="Malfatti S."/>
            <person name="Shin M."/>
            <person name="Vergez L."/>
            <person name="Schmutz J."/>
            <person name="Larimer F."/>
            <person name="Land M."/>
            <person name="Hauser L."/>
            <person name="Kyrpides N."/>
            <person name="Kim E."/>
            <person name="Brettar I."/>
            <person name="Rodrigues J."/>
            <person name="Konstantinidis K."/>
            <person name="Klappenbach J."/>
            <person name="Hofle M."/>
            <person name="Tiedje J."/>
            <person name="Richardson P."/>
        </authorList>
    </citation>
    <scope>NUCLEOTIDE SEQUENCE [LARGE SCALE GENOMIC DNA]</scope>
    <source>
        <strain>OS195</strain>
    </source>
</reference>
<comment type="function">
    <text evidence="1">Converts 2C-methyl-D-erythritol 2,4-cyclodiphosphate (ME-2,4cPP) into 1-hydroxy-2-methyl-2-(E)-butenyl 4-diphosphate.</text>
</comment>
<comment type="catalytic activity">
    <reaction evidence="1">
        <text>(2E)-4-hydroxy-3-methylbut-2-enyl diphosphate + oxidized [flavodoxin] + H2O + 2 H(+) = 2-C-methyl-D-erythritol 2,4-cyclic diphosphate + reduced [flavodoxin]</text>
        <dbReference type="Rhea" id="RHEA:43604"/>
        <dbReference type="Rhea" id="RHEA-COMP:10622"/>
        <dbReference type="Rhea" id="RHEA-COMP:10623"/>
        <dbReference type="ChEBI" id="CHEBI:15377"/>
        <dbReference type="ChEBI" id="CHEBI:15378"/>
        <dbReference type="ChEBI" id="CHEBI:57618"/>
        <dbReference type="ChEBI" id="CHEBI:58210"/>
        <dbReference type="ChEBI" id="CHEBI:58483"/>
        <dbReference type="ChEBI" id="CHEBI:128753"/>
        <dbReference type="EC" id="1.17.7.3"/>
    </reaction>
</comment>
<comment type="cofactor">
    <cofactor evidence="1">
        <name>[4Fe-4S] cluster</name>
        <dbReference type="ChEBI" id="CHEBI:49883"/>
    </cofactor>
    <text evidence="1">Binds 1 [4Fe-4S] cluster.</text>
</comment>
<comment type="pathway">
    <text evidence="1">Isoprenoid biosynthesis; isopentenyl diphosphate biosynthesis via DXP pathway; isopentenyl diphosphate from 1-deoxy-D-xylulose 5-phosphate: step 5/6.</text>
</comment>
<comment type="similarity">
    <text evidence="1">Belongs to the IspG family.</text>
</comment>
<accession>A9KXK8</accession>
<sequence length="371" mass="40625">MYNETPIKRRPSTRIYVGNVPIGDGAPIAVQSMTNTKTTDVEATIAQIRALEKVGADIVRVSVPTMDAAEAFKLIKQAVNVPLVADIHFDYRIALKVAEYGVDCLRINPGNIGNEERIRSVVECARDHNIPIRIGVNGGSLEKDLMDKYKEPTPQALLESAMRHVDILDRLNFDQFKVSVKASDVFLAVESYRLLAKQIRQPLHLGITEAGGARAGSVKSAVGLGMLLAEGIGDTLRISLAADPVEEIKVGFDILKSLRIRSRGINFIACPSCSRQEFDVISTVNELERRLEDVTTAMDVSIIGCVVNGPGEALVSHIGLTGGHNKSGYYDEGERQKERFDNDNIVDSLEAKIRAKASQMANRIQIKDTTE</sequence>
<protein>
    <recommendedName>
        <fullName evidence="1">4-hydroxy-3-methylbut-2-en-1-yl diphosphate synthase (flavodoxin)</fullName>
        <ecNumber evidence="1">1.17.7.3</ecNumber>
    </recommendedName>
    <alternativeName>
        <fullName evidence="1">1-hydroxy-2-methyl-2-(E)-butenyl 4-diphosphate synthase</fullName>
    </alternativeName>
</protein>
<organism>
    <name type="scientific">Shewanella baltica (strain OS195)</name>
    <dbReference type="NCBI Taxonomy" id="399599"/>
    <lineage>
        <taxon>Bacteria</taxon>
        <taxon>Pseudomonadati</taxon>
        <taxon>Pseudomonadota</taxon>
        <taxon>Gammaproteobacteria</taxon>
        <taxon>Alteromonadales</taxon>
        <taxon>Shewanellaceae</taxon>
        <taxon>Shewanella</taxon>
    </lineage>
</organism>
<gene>
    <name evidence="1" type="primary">ispG</name>
    <name type="ordered locus">Sbal195_3148</name>
</gene>
<dbReference type="EC" id="1.17.7.3" evidence="1"/>
<dbReference type="EMBL" id="CP000891">
    <property type="protein sequence ID" value="ABX50310.1"/>
    <property type="molecule type" value="Genomic_DNA"/>
</dbReference>
<dbReference type="RefSeq" id="WP_006082482.1">
    <property type="nucleotide sequence ID" value="NC_009997.1"/>
</dbReference>
<dbReference type="SMR" id="A9KXK8"/>
<dbReference type="GeneID" id="11773204"/>
<dbReference type="KEGG" id="sbn:Sbal195_3148"/>
<dbReference type="HOGENOM" id="CLU_042258_0_0_6"/>
<dbReference type="UniPathway" id="UPA00056">
    <property type="reaction ID" value="UER00096"/>
</dbReference>
<dbReference type="Proteomes" id="UP000000770">
    <property type="component" value="Chromosome"/>
</dbReference>
<dbReference type="GO" id="GO:0051539">
    <property type="term" value="F:4 iron, 4 sulfur cluster binding"/>
    <property type="evidence" value="ECO:0007669"/>
    <property type="project" value="UniProtKB-UniRule"/>
</dbReference>
<dbReference type="GO" id="GO:0046429">
    <property type="term" value="F:4-hydroxy-3-methylbut-2-en-1-yl diphosphate synthase activity (ferredoxin)"/>
    <property type="evidence" value="ECO:0007669"/>
    <property type="project" value="UniProtKB-UniRule"/>
</dbReference>
<dbReference type="GO" id="GO:0141197">
    <property type="term" value="F:4-hydroxy-3-methylbut-2-enyl-diphosphate synthase activity (flavodoxin)"/>
    <property type="evidence" value="ECO:0007669"/>
    <property type="project" value="UniProtKB-EC"/>
</dbReference>
<dbReference type="GO" id="GO:0005506">
    <property type="term" value="F:iron ion binding"/>
    <property type="evidence" value="ECO:0007669"/>
    <property type="project" value="InterPro"/>
</dbReference>
<dbReference type="GO" id="GO:0019288">
    <property type="term" value="P:isopentenyl diphosphate biosynthetic process, methylerythritol 4-phosphate pathway"/>
    <property type="evidence" value="ECO:0007669"/>
    <property type="project" value="UniProtKB-UniRule"/>
</dbReference>
<dbReference type="GO" id="GO:0016114">
    <property type="term" value="P:terpenoid biosynthetic process"/>
    <property type="evidence" value="ECO:0007669"/>
    <property type="project" value="InterPro"/>
</dbReference>
<dbReference type="FunFam" id="3.20.20.20:FF:000001">
    <property type="entry name" value="4-hydroxy-3-methylbut-2-en-1-yl diphosphate synthase (flavodoxin)"/>
    <property type="match status" value="1"/>
</dbReference>
<dbReference type="FunFam" id="3.30.413.10:FF:000002">
    <property type="entry name" value="4-hydroxy-3-methylbut-2-en-1-yl diphosphate synthase (flavodoxin)"/>
    <property type="match status" value="1"/>
</dbReference>
<dbReference type="Gene3D" id="3.20.20.20">
    <property type="entry name" value="Dihydropteroate synthase-like"/>
    <property type="match status" value="1"/>
</dbReference>
<dbReference type="Gene3D" id="3.30.413.10">
    <property type="entry name" value="Sulfite Reductase Hemoprotein, domain 1"/>
    <property type="match status" value="1"/>
</dbReference>
<dbReference type="HAMAP" id="MF_00159">
    <property type="entry name" value="IspG"/>
    <property type="match status" value="1"/>
</dbReference>
<dbReference type="InterPro" id="IPR011005">
    <property type="entry name" value="Dihydropteroate_synth-like_sf"/>
</dbReference>
<dbReference type="InterPro" id="IPR016425">
    <property type="entry name" value="IspG_bac"/>
</dbReference>
<dbReference type="InterPro" id="IPR004588">
    <property type="entry name" value="IspG_bac-typ"/>
</dbReference>
<dbReference type="InterPro" id="IPR045854">
    <property type="entry name" value="NO2/SO3_Rdtase_4Fe4S_sf"/>
</dbReference>
<dbReference type="NCBIfam" id="TIGR00612">
    <property type="entry name" value="ispG_gcpE"/>
    <property type="match status" value="1"/>
</dbReference>
<dbReference type="NCBIfam" id="NF001540">
    <property type="entry name" value="PRK00366.1"/>
    <property type="match status" value="1"/>
</dbReference>
<dbReference type="PANTHER" id="PTHR30454">
    <property type="entry name" value="4-HYDROXY-3-METHYLBUT-2-EN-1-YL DIPHOSPHATE SYNTHASE"/>
    <property type="match status" value="1"/>
</dbReference>
<dbReference type="PANTHER" id="PTHR30454:SF0">
    <property type="entry name" value="4-HYDROXY-3-METHYLBUT-2-EN-1-YL DIPHOSPHATE SYNTHASE (FERREDOXIN), CHLOROPLASTIC"/>
    <property type="match status" value="1"/>
</dbReference>
<dbReference type="Pfam" id="PF04551">
    <property type="entry name" value="GcpE"/>
    <property type="match status" value="1"/>
</dbReference>
<dbReference type="PIRSF" id="PIRSF004640">
    <property type="entry name" value="IspG"/>
    <property type="match status" value="1"/>
</dbReference>
<dbReference type="SUPFAM" id="SSF51717">
    <property type="entry name" value="Dihydropteroate synthetase-like"/>
    <property type="match status" value="1"/>
</dbReference>
<dbReference type="SUPFAM" id="SSF56014">
    <property type="entry name" value="Nitrite and sulphite reductase 4Fe-4S domain-like"/>
    <property type="match status" value="1"/>
</dbReference>
<feature type="chain" id="PRO_1000076899" description="4-hydroxy-3-methylbut-2-en-1-yl diphosphate synthase (flavodoxin)">
    <location>
        <begin position="1"/>
        <end position="371"/>
    </location>
</feature>
<feature type="binding site" evidence="1">
    <location>
        <position position="270"/>
    </location>
    <ligand>
        <name>[4Fe-4S] cluster</name>
        <dbReference type="ChEBI" id="CHEBI:49883"/>
    </ligand>
</feature>
<feature type="binding site" evidence="1">
    <location>
        <position position="273"/>
    </location>
    <ligand>
        <name>[4Fe-4S] cluster</name>
        <dbReference type="ChEBI" id="CHEBI:49883"/>
    </ligand>
</feature>
<feature type="binding site" evidence="1">
    <location>
        <position position="305"/>
    </location>
    <ligand>
        <name>[4Fe-4S] cluster</name>
        <dbReference type="ChEBI" id="CHEBI:49883"/>
    </ligand>
</feature>
<feature type="binding site" evidence="1">
    <location>
        <position position="312"/>
    </location>
    <ligand>
        <name>[4Fe-4S] cluster</name>
        <dbReference type="ChEBI" id="CHEBI:49883"/>
    </ligand>
</feature>
<keyword id="KW-0004">4Fe-4S</keyword>
<keyword id="KW-0408">Iron</keyword>
<keyword id="KW-0411">Iron-sulfur</keyword>
<keyword id="KW-0414">Isoprene biosynthesis</keyword>
<keyword id="KW-0479">Metal-binding</keyword>
<keyword id="KW-0560">Oxidoreductase</keyword>
<evidence type="ECO:0000255" key="1">
    <source>
        <dbReference type="HAMAP-Rule" id="MF_00159"/>
    </source>
</evidence>
<name>ISPG_SHEB9</name>
<proteinExistence type="inferred from homology"/>